<dbReference type="EMBL" id="AP009552">
    <property type="protein sequence ID" value="BAG03224.1"/>
    <property type="molecule type" value="Genomic_DNA"/>
</dbReference>
<dbReference type="STRING" id="449447.MAE_34020"/>
<dbReference type="PaxDb" id="449447-MAE_34020"/>
<dbReference type="EnsemblBacteria" id="BAG03224">
    <property type="protein sequence ID" value="BAG03224"/>
    <property type="gene ID" value="MAE_34020"/>
</dbReference>
<dbReference type="KEGG" id="mar:MAE_34020"/>
<dbReference type="eggNOG" id="COG0759">
    <property type="taxonomic scope" value="Bacteria"/>
</dbReference>
<dbReference type="HOGENOM" id="CLU_144811_5_2_3"/>
<dbReference type="BioCyc" id="MAER449447:MAE_RS14670-MONOMER"/>
<dbReference type="Proteomes" id="UP000001510">
    <property type="component" value="Chromosome"/>
</dbReference>
<dbReference type="GO" id="GO:0005886">
    <property type="term" value="C:plasma membrane"/>
    <property type="evidence" value="ECO:0007669"/>
    <property type="project" value="UniProtKB-SubCell"/>
</dbReference>
<dbReference type="HAMAP" id="MF_00386">
    <property type="entry name" value="UPF0161_YidD"/>
    <property type="match status" value="1"/>
</dbReference>
<dbReference type="InterPro" id="IPR002696">
    <property type="entry name" value="Membr_insert_effic_factor_YidD"/>
</dbReference>
<dbReference type="NCBIfam" id="TIGR00278">
    <property type="entry name" value="membrane protein insertion efficiency factor YidD"/>
    <property type="match status" value="1"/>
</dbReference>
<dbReference type="PANTHER" id="PTHR33383">
    <property type="entry name" value="MEMBRANE PROTEIN INSERTION EFFICIENCY FACTOR-RELATED"/>
    <property type="match status" value="1"/>
</dbReference>
<dbReference type="PANTHER" id="PTHR33383:SF1">
    <property type="entry name" value="MEMBRANE PROTEIN INSERTION EFFICIENCY FACTOR-RELATED"/>
    <property type="match status" value="1"/>
</dbReference>
<dbReference type="Pfam" id="PF01809">
    <property type="entry name" value="YidD"/>
    <property type="match status" value="1"/>
</dbReference>
<dbReference type="SMART" id="SM01234">
    <property type="entry name" value="Haemolytic"/>
    <property type="match status" value="1"/>
</dbReference>
<proteinExistence type="inferred from homology"/>
<keyword id="KW-0997">Cell inner membrane</keyword>
<keyword id="KW-1003">Cell membrane</keyword>
<keyword id="KW-0472">Membrane</keyword>
<sequence>MKGIFIGLIEGYRRFISPLFPPSCRFQPTCSQYAMEAIDRFGVLRGSWLAIKRILRCHPFHPGGYDPVPPCHHKHD</sequence>
<protein>
    <recommendedName>
        <fullName evidence="1">Putative membrane protein insertion efficiency factor</fullName>
    </recommendedName>
</protein>
<name>YIDD_MICAN</name>
<reference key="1">
    <citation type="journal article" date="2007" name="DNA Res.">
        <title>Complete genomic structure of the bloom-forming toxic cyanobacterium Microcystis aeruginosa NIES-843.</title>
        <authorList>
            <person name="Kaneko T."/>
            <person name="Nakajima N."/>
            <person name="Okamoto S."/>
            <person name="Suzuki I."/>
            <person name="Tanabe Y."/>
            <person name="Tamaoki M."/>
            <person name="Nakamura Y."/>
            <person name="Kasai F."/>
            <person name="Watanabe A."/>
            <person name="Kawashima K."/>
            <person name="Kishida Y."/>
            <person name="Ono A."/>
            <person name="Shimizu Y."/>
            <person name="Takahashi C."/>
            <person name="Minami C."/>
            <person name="Fujishiro T."/>
            <person name="Kohara M."/>
            <person name="Katoh M."/>
            <person name="Nakazaki N."/>
            <person name="Nakayama S."/>
            <person name="Yamada M."/>
            <person name="Tabata S."/>
            <person name="Watanabe M.M."/>
        </authorList>
    </citation>
    <scope>NUCLEOTIDE SEQUENCE [LARGE SCALE GENOMIC DNA]</scope>
    <source>
        <strain>NIES-843 / IAM M-247</strain>
    </source>
</reference>
<accession>B0JMD9</accession>
<comment type="function">
    <text evidence="1">Could be involved in insertion of integral membrane proteins into the membrane.</text>
</comment>
<comment type="subcellular location">
    <subcellularLocation>
        <location evidence="1">Cell inner membrane</location>
        <topology evidence="1">Peripheral membrane protein</topology>
        <orientation evidence="1">Cytoplasmic side</orientation>
    </subcellularLocation>
</comment>
<comment type="similarity">
    <text evidence="1">Belongs to the UPF0161 family.</text>
</comment>
<organism>
    <name type="scientific">Microcystis aeruginosa (strain NIES-843 / IAM M-2473)</name>
    <dbReference type="NCBI Taxonomy" id="449447"/>
    <lineage>
        <taxon>Bacteria</taxon>
        <taxon>Bacillati</taxon>
        <taxon>Cyanobacteriota</taxon>
        <taxon>Cyanophyceae</taxon>
        <taxon>Oscillatoriophycideae</taxon>
        <taxon>Chroococcales</taxon>
        <taxon>Microcystaceae</taxon>
        <taxon>Microcystis</taxon>
    </lineage>
</organism>
<evidence type="ECO:0000255" key="1">
    <source>
        <dbReference type="HAMAP-Rule" id="MF_00386"/>
    </source>
</evidence>
<feature type="chain" id="PRO_1000197764" description="Putative membrane protein insertion efficiency factor">
    <location>
        <begin position="1"/>
        <end position="76"/>
    </location>
</feature>
<gene>
    <name type="ordered locus">MAE_34020</name>
</gene>